<evidence type="ECO:0000250" key="1"/>
<evidence type="ECO:0000256" key="2">
    <source>
        <dbReference type="SAM" id="MobiDB-lite"/>
    </source>
</evidence>
<evidence type="ECO:0000305" key="3"/>
<reference key="1">
    <citation type="journal article" date="2005" name="PLoS Biol.">
        <title>The genomes of Oryza sativa: a history of duplications.</title>
        <authorList>
            <person name="Yu J."/>
            <person name="Wang J."/>
            <person name="Lin W."/>
            <person name="Li S."/>
            <person name="Li H."/>
            <person name="Zhou J."/>
            <person name="Ni P."/>
            <person name="Dong W."/>
            <person name="Hu S."/>
            <person name="Zeng C."/>
            <person name="Zhang J."/>
            <person name="Zhang Y."/>
            <person name="Li R."/>
            <person name="Xu Z."/>
            <person name="Li S."/>
            <person name="Li X."/>
            <person name="Zheng H."/>
            <person name="Cong L."/>
            <person name="Lin L."/>
            <person name="Yin J."/>
            <person name="Geng J."/>
            <person name="Li G."/>
            <person name="Shi J."/>
            <person name="Liu J."/>
            <person name="Lv H."/>
            <person name="Li J."/>
            <person name="Wang J."/>
            <person name="Deng Y."/>
            <person name="Ran L."/>
            <person name="Shi X."/>
            <person name="Wang X."/>
            <person name="Wu Q."/>
            <person name="Li C."/>
            <person name="Ren X."/>
            <person name="Wang J."/>
            <person name="Wang X."/>
            <person name="Li D."/>
            <person name="Liu D."/>
            <person name="Zhang X."/>
            <person name="Ji Z."/>
            <person name="Zhao W."/>
            <person name="Sun Y."/>
            <person name="Zhang Z."/>
            <person name="Bao J."/>
            <person name="Han Y."/>
            <person name="Dong L."/>
            <person name="Ji J."/>
            <person name="Chen P."/>
            <person name="Wu S."/>
            <person name="Liu J."/>
            <person name="Xiao Y."/>
            <person name="Bu D."/>
            <person name="Tan J."/>
            <person name="Yang L."/>
            <person name="Ye C."/>
            <person name="Zhang J."/>
            <person name="Xu J."/>
            <person name="Zhou Y."/>
            <person name="Yu Y."/>
            <person name="Zhang B."/>
            <person name="Zhuang S."/>
            <person name="Wei H."/>
            <person name="Liu B."/>
            <person name="Lei M."/>
            <person name="Yu H."/>
            <person name="Li Y."/>
            <person name="Xu H."/>
            <person name="Wei S."/>
            <person name="He X."/>
            <person name="Fang L."/>
            <person name="Zhang Z."/>
            <person name="Zhang Y."/>
            <person name="Huang X."/>
            <person name="Su Z."/>
            <person name="Tong W."/>
            <person name="Li J."/>
            <person name="Tong Z."/>
            <person name="Li S."/>
            <person name="Ye J."/>
            <person name="Wang L."/>
            <person name="Fang L."/>
            <person name="Lei T."/>
            <person name="Chen C.-S."/>
            <person name="Chen H.-C."/>
            <person name="Xu Z."/>
            <person name="Li H."/>
            <person name="Huang H."/>
            <person name="Zhang F."/>
            <person name="Xu H."/>
            <person name="Li N."/>
            <person name="Zhao C."/>
            <person name="Li S."/>
            <person name="Dong L."/>
            <person name="Huang Y."/>
            <person name="Li L."/>
            <person name="Xi Y."/>
            <person name="Qi Q."/>
            <person name="Li W."/>
            <person name="Zhang B."/>
            <person name="Hu W."/>
            <person name="Zhang Y."/>
            <person name="Tian X."/>
            <person name="Jiao Y."/>
            <person name="Liang X."/>
            <person name="Jin J."/>
            <person name="Gao L."/>
            <person name="Zheng W."/>
            <person name="Hao B."/>
            <person name="Liu S.-M."/>
            <person name="Wang W."/>
            <person name="Yuan L."/>
            <person name="Cao M."/>
            <person name="McDermott J."/>
            <person name="Samudrala R."/>
            <person name="Wang J."/>
            <person name="Wong G.K.-S."/>
            <person name="Yang H."/>
        </authorList>
    </citation>
    <scope>NUCLEOTIDE SEQUENCE [LARGE SCALE GENOMIC DNA]</scope>
    <source>
        <strain>cv. 93-11</strain>
    </source>
</reference>
<organism>
    <name type="scientific">Oryza sativa subsp. indica</name>
    <name type="common">Rice</name>
    <dbReference type="NCBI Taxonomy" id="39946"/>
    <lineage>
        <taxon>Eukaryota</taxon>
        <taxon>Viridiplantae</taxon>
        <taxon>Streptophyta</taxon>
        <taxon>Embryophyta</taxon>
        <taxon>Tracheophyta</taxon>
        <taxon>Spermatophyta</taxon>
        <taxon>Magnoliopsida</taxon>
        <taxon>Liliopsida</taxon>
        <taxon>Poales</taxon>
        <taxon>Poaceae</taxon>
        <taxon>BOP clade</taxon>
        <taxon>Oryzoideae</taxon>
        <taxon>Oryzeae</taxon>
        <taxon>Oryzinae</taxon>
        <taxon>Oryza</taxon>
        <taxon>Oryza sativa</taxon>
    </lineage>
</organism>
<keyword id="KW-0238">DNA-binding</keyword>
<keyword id="KW-0479">Metal-binding</keyword>
<keyword id="KW-0539">Nucleus</keyword>
<keyword id="KW-1185">Reference proteome</keyword>
<keyword id="KW-0804">Transcription</keyword>
<keyword id="KW-0805">Transcription regulation</keyword>
<keyword id="KW-0862">Zinc</keyword>
<keyword id="KW-0863">Zinc-finger</keyword>
<feature type="chain" id="PRO_0000416878" description="TATA box-binding protein-associated factor RNA polymerase I subunit B">
    <location>
        <begin position="1"/>
        <end position="634"/>
    </location>
</feature>
<feature type="zinc finger region" description="RRN7-type">
    <location>
        <begin position="19"/>
        <end position="51"/>
    </location>
</feature>
<feature type="region of interest" description="B-reader" evidence="1">
    <location>
        <begin position="51"/>
        <end position="80"/>
    </location>
</feature>
<feature type="region of interest" description="Disordered" evidence="2">
    <location>
        <begin position="56"/>
        <end position="117"/>
    </location>
</feature>
<feature type="region of interest" description="B-linker" evidence="1">
    <location>
        <begin position="81"/>
        <end position="83"/>
    </location>
</feature>
<feature type="region of interest" description="N-terminal cyclin fold" evidence="1">
    <location>
        <begin position="84"/>
        <end position="281"/>
    </location>
</feature>
<feature type="region of interest" description="C-terminal cyclin fold" evidence="1">
    <location>
        <begin position="282"/>
        <end position="284"/>
    </location>
</feature>
<feature type="compositionally biased region" description="Pro residues" evidence="2">
    <location>
        <begin position="77"/>
        <end position="87"/>
    </location>
</feature>
<feature type="compositionally biased region" description="Low complexity" evidence="2">
    <location>
        <begin position="88"/>
        <end position="98"/>
    </location>
</feature>
<feature type="binding site" evidence="1">
    <location>
        <position position="21"/>
    </location>
    <ligand>
        <name>Zn(2+)</name>
        <dbReference type="ChEBI" id="CHEBI:29105"/>
    </ligand>
</feature>
<feature type="binding site" evidence="1">
    <location>
        <position position="24"/>
    </location>
    <ligand>
        <name>Zn(2+)</name>
        <dbReference type="ChEBI" id="CHEBI:29105"/>
    </ligand>
</feature>
<feature type="binding site" evidence="1">
    <location>
        <position position="42"/>
    </location>
    <ligand>
        <name>Zn(2+)</name>
        <dbReference type="ChEBI" id="CHEBI:29105"/>
    </ligand>
</feature>
<feature type="binding site" evidence="1">
    <location>
        <position position="45"/>
    </location>
    <ligand>
        <name>Zn(2+)</name>
        <dbReference type="ChEBI" id="CHEBI:29105"/>
    </ligand>
</feature>
<name>TAF1B_ORYSI</name>
<comment type="function">
    <text evidence="1">Component of RNA polymerase I core factor complex that acts as a GTF2B/TFIIB-like factor and plays a key role in multiple steps during transcription initiation such as pre-initiation complex (PIC) assembly and postpolymerase recruitment events in polymerase I (Pol I) transcription. Binds rDNA promoters and plays a role in Pol I recruitment (By similarity).</text>
</comment>
<comment type="subcellular location">
    <subcellularLocation>
        <location evidence="1">Nucleus</location>
        <location evidence="1">Nucleolus</location>
    </subcellularLocation>
</comment>
<comment type="domain">
    <text evidence="1">Although it shares weak sequence similarity with GTF2B/TFIIB, displays a similar subdomain organization as GTF2B/TFIIB, with a N-terminal zinc finger, a connecting region (composed of B-reader and B-linker regions), followed by 2 cyclin folds.</text>
</comment>
<comment type="similarity">
    <text evidence="3">Belongs to the RRN7/TAF1B family.</text>
</comment>
<accession>B8AX23</accession>
<dbReference type="EMBL" id="CM000130">
    <property type="protein sequence ID" value="EEC79036.1"/>
    <property type="molecule type" value="Genomic_DNA"/>
</dbReference>
<dbReference type="STRING" id="39946.B8AX23"/>
<dbReference type="EnsemblPlants" id="BGIOSGA019668-TA">
    <property type="protein sequence ID" value="BGIOSGA019668-PA"/>
    <property type="gene ID" value="BGIOSGA019668"/>
</dbReference>
<dbReference type="Gramene" id="BGIOSGA019668-TA">
    <property type="protein sequence ID" value="BGIOSGA019668-PA"/>
    <property type="gene ID" value="BGIOSGA019668"/>
</dbReference>
<dbReference type="HOGENOM" id="CLU_011285_1_0_1"/>
<dbReference type="OMA" id="FGQRAVM"/>
<dbReference type="Proteomes" id="UP000007015">
    <property type="component" value="Chromosome 5"/>
</dbReference>
<dbReference type="GO" id="GO:0070860">
    <property type="term" value="C:RNA polymerase I core factor complex"/>
    <property type="evidence" value="ECO:0007669"/>
    <property type="project" value="InterPro"/>
</dbReference>
<dbReference type="GO" id="GO:0001164">
    <property type="term" value="F:RNA polymerase I core promoter sequence-specific DNA binding"/>
    <property type="evidence" value="ECO:0007669"/>
    <property type="project" value="InterPro"/>
</dbReference>
<dbReference type="GO" id="GO:0008270">
    <property type="term" value="F:zinc ion binding"/>
    <property type="evidence" value="ECO:0007669"/>
    <property type="project" value="UniProtKB-KW"/>
</dbReference>
<dbReference type="GO" id="GO:0042790">
    <property type="term" value="P:nucleolar large rRNA transcription by RNA polymerase I"/>
    <property type="evidence" value="ECO:0007669"/>
    <property type="project" value="TreeGrafter"/>
</dbReference>
<dbReference type="InterPro" id="IPR048538">
    <property type="entry name" value="Rrn7_cyclin_C"/>
</dbReference>
<dbReference type="InterPro" id="IPR048540">
    <property type="entry name" value="Rrn7_cyclin_N"/>
</dbReference>
<dbReference type="InterPro" id="IPR033599">
    <property type="entry name" value="TAF1B/Rrn7"/>
</dbReference>
<dbReference type="PANTHER" id="PTHR31576">
    <property type="entry name" value="TATA BOX-BINDING PROTEIN-ASSOCIATED FACTOR RNA POLYMERASE I SUBUNIT B"/>
    <property type="match status" value="1"/>
</dbReference>
<dbReference type="PANTHER" id="PTHR31576:SF2">
    <property type="entry name" value="TATA BOX-BINDING PROTEIN-ASSOCIATED FACTOR RNA POLYMERASE I SUBUNIT B"/>
    <property type="match status" value="1"/>
</dbReference>
<dbReference type="Pfam" id="PF20645">
    <property type="entry name" value="Rrn7_cyclin_C"/>
    <property type="match status" value="1"/>
</dbReference>
<dbReference type="Pfam" id="PF20644">
    <property type="entry name" value="Rrn7_cyclin_N"/>
    <property type="match status" value="1"/>
</dbReference>
<protein>
    <recommendedName>
        <fullName>TATA box-binding protein-associated factor RNA polymerase I subunit B</fullName>
    </recommendedName>
    <alternativeName>
        <fullName>TATA box-binding protein-associated factor 1B</fullName>
        <shortName>TBP-associated factor 1B</shortName>
    </alternativeName>
</protein>
<gene>
    <name type="ORF">OsI_19584</name>
</gene>
<proteinExistence type="inferred from homology"/>
<sequence length="634" mass="70539">MDDDGGGSPGHYGGGGIHLVCEYCGHGSEYAEDDADNGFFTCRQCSAIHTSTQNTATNPFDFPMTPAHLSAHRRPTQPTPTPKPFPAPRGAATGAAAPDFDDLGEPSEPRDFATGANAWGNPEDVAARVRWRYVRGLQVILQRQLEALVERHRVGSLAASLAGTIWLRWVAASKVFDEMWVHKMLAIAASVEEGHSASKDKQSELEGDAQKSQSSYEFLFLRSLRMMLPVYSTLAVCFLACHVARETILPTDICRWAMEGKLPYVAAFTQVDKLLGSSLNDCPLSSRQLFRPTRVIGAWQLEAAAGSIAQKIGLLLPSVNFYLIAQRFLKELSLPIEKILPHACRIYEWAMPAELWLSSNPGRVPSRVCVMAILIVALRVLYGINGQGIWESIAQTENAVGSDPEASAPHSIEPDSNNSEEFDARELLCTLAASYDKIDVGHDYSKEVHSYLKYCKDVVFTGMTFSLEEEHLIDIFWDMYKGKEVMLLDENAKLCQEKLRTTNGVNKRCRDGRFADTKCCSTPLGNCALQSIKSKMEENGFCYVSPRKRLVSDGYLLYTRRESSGSLIYVAHADYYILLRPFAKLAEVDVRVLHSSVLKLERRLGWIEERVGRSLNTLQNLHDEASDDERPVSD</sequence>